<name>RS7_CHLMU</name>
<reference key="1">
    <citation type="journal article" date="2000" name="Nucleic Acids Res.">
        <title>Genome sequences of Chlamydia trachomatis MoPn and Chlamydia pneumoniae AR39.</title>
        <authorList>
            <person name="Read T.D."/>
            <person name="Brunham R.C."/>
            <person name="Shen C."/>
            <person name="Gill S.R."/>
            <person name="Heidelberg J.F."/>
            <person name="White O."/>
            <person name="Hickey E.K."/>
            <person name="Peterson J.D."/>
            <person name="Utterback T.R."/>
            <person name="Berry K.J."/>
            <person name="Bass S."/>
            <person name="Linher K.D."/>
            <person name="Weidman J.F."/>
            <person name="Khouri H.M."/>
            <person name="Craven B."/>
            <person name="Bowman C."/>
            <person name="Dodson R.J."/>
            <person name="Gwinn M.L."/>
            <person name="Nelson W.C."/>
            <person name="DeBoy R.T."/>
            <person name="Kolonay J.F."/>
            <person name="McClarty G."/>
            <person name="Salzberg S.L."/>
            <person name="Eisen J.A."/>
            <person name="Fraser C.M."/>
        </authorList>
    </citation>
    <scope>NUCLEOTIDE SEQUENCE [LARGE SCALE GENOMIC DNA]</scope>
    <source>
        <strain>MoPn / Nigg</strain>
    </source>
</reference>
<comment type="function">
    <text evidence="1">One of the primary rRNA binding proteins, it binds directly to 16S rRNA where it nucleates assembly of the head domain of the 30S subunit. Is located at the subunit interface close to the decoding center, probably blocks exit of the E-site tRNA.</text>
</comment>
<comment type="subunit">
    <text evidence="1">Part of the 30S ribosomal subunit. Contacts proteins S9 and S11.</text>
</comment>
<comment type="similarity">
    <text evidence="1">Belongs to the universal ribosomal protein uS7 family.</text>
</comment>
<keyword id="KW-0687">Ribonucleoprotein</keyword>
<keyword id="KW-0689">Ribosomal protein</keyword>
<keyword id="KW-0694">RNA-binding</keyword>
<keyword id="KW-0699">rRNA-binding</keyword>
<keyword id="KW-0820">tRNA-binding</keyword>
<feature type="chain" id="PRO_0000124244" description="Small ribosomal subunit protein uS7">
    <location>
        <begin position="1"/>
        <end position="157"/>
    </location>
</feature>
<proteinExistence type="inferred from homology"/>
<protein>
    <recommendedName>
        <fullName evidence="1">Small ribosomal subunit protein uS7</fullName>
    </recommendedName>
    <alternativeName>
        <fullName evidence="2">30S ribosomal protein S7</fullName>
    </alternativeName>
</protein>
<evidence type="ECO:0000255" key="1">
    <source>
        <dbReference type="HAMAP-Rule" id="MF_00480"/>
    </source>
</evidence>
<evidence type="ECO:0000305" key="2"/>
<gene>
    <name evidence="1" type="primary">rpsG</name>
    <name type="ordered locus">TC_0722</name>
</gene>
<dbReference type="EMBL" id="AE002160">
    <property type="protein sequence ID" value="AAF39533.1"/>
    <property type="molecule type" value="Genomic_DNA"/>
</dbReference>
<dbReference type="PIR" id="H81672">
    <property type="entry name" value="H81672"/>
</dbReference>
<dbReference type="RefSeq" id="WP_010231342.1">
    <property type="nucleotide sequence ID" value="NZ_CP063055.1"/>
</dbReference>
<dbReference type="SMR" id="Q9PJV5"/>
<dbReference type="GeneID" id="1246085"/>
<dbReference type="KEGG" id="cmu:TC_0722"/>
<dbReference type="eggNOG" id="COG0049">
    <property type="taxonomic scope" value="Bacteria"/>
</dbReference>
<dbReference type="HOGENOM" id="CLU_072226_1_1_0"/>
<dbReference type="OrthoDB" id="9807653at2"/>
<dbReference type="Proteomes" id="UP000000800">
    <property type="component" value="Chromosome"/>
</dbReference>
<dbReference type="GO" id="GO:0015935">
    <property type="term" value="C:small ribosomal subunit"/>
    <property type="evidence" value="ECO:0007669"/>
    <property type="project" value="InterPro"/>
</dbReference>
<dbReference type="GO" id="GO:0019843">
    <property type="term" value="F:rRNA binding"/>
    <property type="evidence" value="ECO:0007669"/>
    <property type="project" value="UniProtKB-UniRule"/>
</dbReference>
<dbReference type="GO" id="GO:0003735">
    <property type="term" value="F:structural constituent of ribosome"/>
    <property type="evidence" value="ECO:0007669"/>
    <property type="project" value="InterPro"/>
</dbReference>
<dbReference type="GO" id="GO:0000049">
    <property type="term" value="F:tRNA binding"/>
    <property type="evidence" value="ECO:0007669"/>
    <property type="project" value="UniProtKB-UniRule"/>
</dbReference>
<dbReference type="GO" id="GO:0006412">
    <property type="term" value="P:translation"/>
    <property type="evidence" value="ECO:0007669"/>
    <property type="project" value="UniProtKB-UniRule"/>
</dbReference>
<dbReference type="CDD" id="cd14869">
    <property type="entry name" value="uS7_Bacteria"/>
    <property type="match status" value="1"/>
</dbReference>
<dbReference type="FunFam" id="1.10.455.10:FF:000001">
    <property type="entry name" value="30S ribosomal protein S7"/>
    <property type="match status" value="1"/>
</dbReference>
<dbReference type="Gene3D" id="1.10.455.10">
    <property type="entry name" value="Ribosomal protein S7 domain"/>
    <property type="match status" value="1"/>
</dbReference>
<dbReference type="HAMAP" id="MF_00480_B">
    <property type="entry name" value="Ribosomal_uS7_B"/>
    <property type="match status" value="1"/>
</dbReference>
<dbReference type="InterPro" id="IPR000235">
    <property type="entry name" value="Ribosomal_uS7"/>
</dbReference>
<dbReference type="InterPro" id="IPR005717">
    <property type="entry name" value="Ribosomal_uS7_bac/org-type"/>
</dbReference>
<dbReference type="InterPro" id="IPR020606">
    <property type="entry name" value="Ribosomal_uS7_CS"/>
</dbReference>
<dbReference type="InterPro" id="IPR023798">
    <property type="entry name" value="Ribosomal_uS7_dom"/>
</dbReference>
<dbReference type="InterPro" id="IPR036823">
    <property type="entry name" value="Ribosomal_uS7_dom_sf"/>
</dbReference>
<dbReference type="NCBIfam" id="TIGR01029">
    <property type="entry name" value="rpsG_bact"/>
    <property type="match status" value="1"/>
</dbReference>
<dbReference type="PANTHER" id="PTHR11205">
    <property type="entry name" value="RIBOSOMAL PROTEIN S7"/>
    <property type="match status" value="1"/>
</dbReference>
<dbReference type="Pfam" id="PF00177">
    <property type="entry name" value="Ribosomal_S7"/>
    <property type="match status" value="1"/>
</dbReference>
<dbReference type="PIRSF" id="PIRSF002122">
    <property type="entry name" value="RPS7p_RPS7a_RPS5e_RPS7o"/>
    <property type="match status" value="1"/>
</dbReference>
<dbReference type="SUPFAM" id="SSF47973">
    <property type="entry name" value="Ribosomal protein S7"/>
    <property type="match status" value="1"/>
</dbReference>
<dbReference type="PROSITE" id="PS00052">
    <property type="entry name" value="RIBOSOMAL_S7"/>
    <property type="match status" value="1"/>
</dbReference>
<organism>
    <name type="scientific">Chlamydia muridarum (strain MoPn / Nigg)</name>
    <dbReference type="NCBI Taxonomy" id="243161"/>
    <lineage>
        <taxon>Bacteria</taxon>
        <taxon>Pseudomonadati</taxon>
        <taxon>Chlamydiota</taxon>
        <taxon>Chlamydiia</taxon>
        <taxon>Chlamydiales</taxon>
        <taxon>Chlamydiaceae</taxon>
        <taxon>Chlamydia/Chlamydophila group</taxon>
        <taxon>Chlamydia</taxon>
    </lineage>
</organism>
<accession>Q9PJV5</accession>
<sequence>MSRRHAAEKKVIPGDPVYGSVVLERFINKVMLHGKKSIARKIVYGALERFAKRLGLENPLEGFEEALENAKPILEVRSRRVGGATYQVPVEVAPDRRSCLAMQWIIKHARSKPGKCMEIGLANELIDCFNKQGATIKKREDTHRMAEANKAFAHYKW</sequence>